<protein>
    <recommendedName>
        <fullName evidence="1">Probable molybdenum cofactor guanylyltransferase</fullName>
        <shortName evidence="1">MoCo guanylyltransferase</shortName>
        <ecNumber evidence="1">2.7.7.77</ecNumber>
    </recommendedName>
    <alternativeName>
        <fullName evidence="1">GTP:molybdopterin guanylyltransferase</fullName>
    </alternativeName>
    <alternativeName>
        <fullName evidence="1">Mo-MPT guanylyltransferase</fullName>
    </alternativeName>
    <alternativeName>
        <fullName evidence="1">Molybdopterin guanylyltransferase</fullName>
    </alternativeName>
    <alternativeName>
        <fullName evidence="1">Molybdopterin-guanine dinucleotide synthase</fullName>
        <shortName evidence="1">MGD synthase</shortName>
    </alternativeName>
</protein>
<organism>
    <name type="scientific">Clostridium perfringens (strain 13 / Type A)</name>
    <dbReference type="NCBI Taxonomy" id="195102"/>
    <lineage>
        <taxon>Bacteria</taxon>
        <taxon>Bacillati</taxon>
        <taxon>Bacillota</taxon>
        <taxon>Clostridia</taxon>
        <taxon>Eubacteriales</taxon>
        <taxon>Clostridiaceae</taxon>
        <taxon>Clostridium</taxon>
    </lineage>
</organism>
<dbReference type="EC" id="2.7.7.77" evidence="1"/>
<dbReference type="EMBL" id="AB017192">
    <property type="protein sequence ID" value="BAA76926.1"/>
    <property type="molecule type" value="Genomic_DNA"/>
</dbReference>
<dbReference type="EMBL" id="BA000016">
    <property type="protein sequence ID" value="BAB81498.1"/>
    <property type="status" value="ALT_INIT"/>
    <property type="molecule type" value="Genomic_DNA"/>
</dbReference>
<dbReference type="RefSeq" id="WP_041707861.1">
    <property type="nucleotide sequence ID" value="NC_003366.1"/>
</dbReference>
<dbReference type="SMR" id="Q9WX94"/>
<dbReference type="STRING" id="195102.gene:10491056"/>
<dbReference type="KEGG" id="cpe:CPE1792"/>
<dbReference type="HOGENOM" id="CLU_055597_2_0_9"/>
<dbReference type="Proteomes" id="UP000000818">
    <property type="component" value="Chromosome"/>
</dbReference>
<dbReference type="GO" id="GO:0005737">
    <property type="term" value="C:cytoplasm"/>
    <property type="evidence" value="ECO:0007669"/>
    <property type="project" value="UniProtKB-SubCell"/>
</dbReference>
<dbReference type="GO" id="GO:0005525">
    <property type="term" value="F:GTP binding"/>
    <property type="evidence" value="ECO:0007669"/>
    <property type="project" value="UniProtKB-UniRule"/>
</dbReference>
<dbReference type="GO" id="GO:0046872">
    <property type="term" value="F:metal ion binding"/>
    <property type="evidence" value="ECO:0007669"/>
    <property type="project" value="UniProtKB-KW"/>
</dbReference>
<dbReference type="GO" id="GO:0061603">
    <property type="term" value="F:molybdenum cofactor guanylyltransferase activity"/>
    <property type="evidence" value="ECO:0007669"/>
    <property type="project" value="UniProtKB-EC"/>
</dbReference>
<dbReference type="GO" id="GO:0006777">
    <property type="term" value="P:Mo-molybdopterin cofactor biosynthetic process"/>
    <property type="evidence" value="ECO:0007669"/>
    <property type="project" value="UniProtKB-KW"/>
</dbReference>
<dbReference type="CDD" id="cd02503">
    <property type="entry name" value="MobA"/>
    <property type="match status" value="1"/>
</dbReference>
<dbReference type="Gene3D" id="3.90.550.10">
    <property type="entry name" value="Spore Coat Polysaccharide Biosynthesis Protein SpsA, Chain A"/>
    <property type="match status" value="1"/>
</dbReference>
<dbReference type="HAMAP" id="MF_00316">
    <property type="entry name" value="MobA"/>
    <property type="match status" value="1"/>
</dbReference>
<dbReference type="InterPro" id="IPR025877">
    <property type="entry name" value="MobA-like_NTP_Trfase"/>
</dbReference>
<dbReference type="InterPro" id="IPR013482">
    <property type="entry name" value="Molybde_CF_guanTrfase"/>
</dbReference>
<dbReference type="InterPro" id="IPR029044">
    <property type="entry name" value="Nucleotide-diphossugar_trans"/>
</dbReference>
<dbReference type="PANTHER" id="PTHR19136">
    <property type="entry name" value="MOLYBDENUM COFACTOR GUANYLYLTRANSFERASE"/>
    <property type="match status" value="1"/>
</dbReference>
<dbReference type="PANTHER" id="PTHR19136:SF81">
    <property type="entry name" value="MOLYBDENUM COFACTOR GUANYLYLTRANSFERASE"/>
    <property type="match status" value="1"/>
</dbReference>
<dbReference type="Pfam" id="PF12804">
    <property type="entry name" value="NTP_transf_3"/>
    <property type="match status" value="1"/>
</dbReference>
<dbReference type="SUPFAM" id="SSF53448">
    <property type="entry name" value="Nucleotide-diphospho-sugar transferases"/>
    <property type="match status" value="1"/>
</dbReference>
<keyword id="KW-0963">Cytoplasm</keyword>
<keyword id="KW-0342">GTP-binding</keyword>
<keyword id="KW-0460">Magnesium</keyword>
<keyword id="KW-0479">Metal-binding</keyword>
<keyword id="KW-0501">Molybdenum cofactor biosynthesis</keyword>
<keyword id="KW-0547">Nucleotide-binding</keyword>
<keyword id="KW-1185">Reference proteome</keyword>
<keyword id="KW-0808">Transferase</keyword>
<feature type="chain" id="PRO_0000134885" description="Probable molybdenum cofactor guanylyltransferase">
    <location>
        <begin position="1"/>
        <end position="198"/>
    </location>
</feature>
<feature type="binding site" evidence="1">
    <location>
        <begin position="9"/>
        <end position="11"/>
    </location>
    <ligand>
        <name>GTP</name>
        <dbReference type="ChEBI" id="CHEBI:37565"/>
    </ligand>
</feature>
<feature type="binding site" evidence="1">
    <location>
        <position position="22"/>
    </location>
    <ligand>
        <name>GTP</name>
        <dbReference type="ChEBI" id="CHEBI:37565"/>
    </ligand>
</feature>
<feature type="binding site" evidence="1">
    <location>
        <position position="66"/>
    </location>
    <ligand>
        <name>GTP</name>
        <dbReference type="ChEBI" id="CHEBI:37565"/>
    </ligand>
</feature>
<feature type="binding site" evidence="1">
    <location>
        <position position="95"/>
    </location>
    <ligand>
        <name>GTP</name>
        <dbReference type="ChEBI" id="CHEBI:37565"/>
    </ligand>
</feature>
<feature type="binding site" evidence="1">
    <location>
        <position position="95"/>
    </location>
    <ligand>
        <name>Mg(2+)</name>
        <dbReference type="ChEBI" id="CHEBI:18420"/>
    </ligand>
</feature>
<feature type="sequence conflict" description="In Ref. 1; BAA76926." evidence="2" ref="1">
    <original>K</original>
    <variation>E</variation>
    <location>
        <position position="41"/>
    </location>
</feature>
<feature type="sequence conflict" description="In Ref. 1; BAA76926." evidence="2" ref="1">
    <original>E</original>
    <variation>G</variation>
    <location>
        <position position="54"/>
    </location>
</feature>
<feature type="sequence conflict" description="In Ref. 1; BAA76926." evidence="2" ref="1">
    <original>S</original>
    <variation>G</variation>
    <location>
        <position position="70"/>
    </location>
</feature>
<proteinExistence type="inferred from homology"/>
<evidence type="ECO:0000255" key="1">
    <source>
        <dbReference type="HAMAP-Rule" id="MF_00316"/>
    </source>
</evidence>
<evidence type="ECO:0000305" key="2"/>
<sequence>MIKKSAAILAGGKSSRMNYRNKAFLKYEEDYFIERIIKALKDYEEIIIISNNPEEYKEFGLKVFKDIYPSQGPLSGIHSALNHIKNDYCLVVACDMPFINKDVVNYLGNIKEDYEILIPKFQERLQPLCAIYKKSCKDIMEKELINNSNKLIKTCFKFSMKVVEEFPFIEKVHKKEIKNFYNINTVDEYEDLIKKKEI</sequence>
<gene>
    <name evidence="1" type="primary">mobA</name>
    <name type="ordered locus">CPE1792</name>
</gene>
<accession>Q9WX94</accession>
<reference key="1">
    <citation type="journal article" date="1999" name="Microbiology">
        <title>Analysis of genes involved in nitrate reduction in Clostridium perfringens.</title>
        <authorList>
            <person name="Fujinaga K."/>
            <person name="Taniguchi Y."/>
            <person name="Sun Y."/>
            <person name="Katayama S."/>
            <person name="Minami J."/>
            <person name="Matsushita O."/>
            <person name="Okabe A."/>
        </authorList>
    </citation>
    <scope>NUCLEOTIDE SEQUENCE [GENOMIC DNA]</scope>
    <source>
        <strain>ATCC 10543 / DSM 798 / NCIB 8875 / BP6K / Type A</strain>
    </source>
</reference>
<reference key="2">
    <citation type="journal article" date="2002" name="Proc. Natl. Acad. Sci. U.S.A.">
        <title>Complete genome sequence of Clostridium perfringens, an anaerobic flesh-eater.</title>
        <authorList>
            <person name="Shimizu T."/>
            <person name="Ohtani K."/>
            <person name="Hirakawa H."/>
            <person name="Ohshima K."/>
            <person name="Yamashita A."/>
            <person name="Shiba T."/>
            <person name="Ogasawara N."/>
            <person name="Hattori M."/>
            <person name="Kuhara S."/>
            <person name="Hayashi H."/>
        </authorList>
    </citation>
    <scope>NUCLEOTIDE SEQUENCE [LARGE SCALE GENOMIC DNA]</scope>
    <source>
        <strain>13 / Type A</strain>
    </source>
</reference>
<comment type="function">
    <text evidence="1">Transfers a GMP moiety from GTP to Mo-molybdopterin (Mo-MPT) cofactor (Moco or molybdenum cofactor) to form Mo-molybdopterin guanine dinucleotide (Mo-MGD) cofactor.</text>
</comment>
<comment type="catalytic activity">
    <reaction evidence="1">
        <text>Mo-molybdopterin + GTP + H(+) = Mo-molybdopterin guanine dinucleotide + diphosphate</text>
        <dbReference type="Rhea" id="RHEA:34243"/>
        <dbReference type="ChEBI" id="CHEBI:15378"/>
        <dbReference type="ChEBI" id="CHEBI:33019"/>
        <dbReference type="ChEBI" id="CHEBI:37565"/>
        <dbReference type="ChEBI" id="CHEBI:71302"/>
        <dbReference type="ChEBI" id="CHEBI:71310"/>
        <dbReference type="EC" id="2.7.7.77"/>
    </reaction>
</comment>
<comment type="cofactor">
    <cofactor evidence="1">
        <name>Mg(2+)</name>
        <dbReference type="ChEBI" id="CHEBI:18420"/>
    </cofactor>
</comment>
<comment type="subcellular location">
    <subcellularLocation>
        <location evidence="1">Cytoplasm</location>
    </subcellularLocation>
</comment>
<comment type="domain">
    <text evidence="1">The N-terminal domain determines nucleotide recognition and specific binding, while the C-terminal domain determines the specific binding to the target protein.</text>
</comment>
<comment type="similarity">
    <text evidence="1">Belongs to the MobA family.</text>
</comment>
<comment type="sequence caution" evidence="2">
    <conflict type="erroneous initiation">
        <sequence resource="EMBL-CDS" id="BAB81498"/>
    </conflict>
</comment>
<name>MOBA_CLOPE</name>